<comment type="subcellular location">
    <subcellularLocation>
        <location evidence="2">Secreted</location>
    </subcellularLocation>
</comment>
<comment type="PTM">
    <text evidence="1">The C-terminal propeptide is autocleaved.</text>
</comment>
<comment type="similarity">
    <text evidence="8">Belongs to the peptidase S8 family.</text>
</comment>
<accession>Q9FIG2</accession>
<sequence>MATLAASSSLLSCLLVLFLSSVSAVTDDKQVYIVYMGSLSSRADYTPTSDHMNILQEVTGESSIEGRLVRSYKRSFNGFAARLTESERERVAKMVGVVSVFPNKKLQLQTTTSWDFMGLKEGIKTKRNPTVESDTIIGVIDSGITPESQSFSDKGFGPPPQKWKGVCSGGKNFTCNNKLIGARDYTSEGTRDMDGHGTHTASTAAGNAVVDASFFGIGNGTVRGGVPASRVAAYKVCTPTGCSSEALLSAFDDAIADGVDLITISIGDKTASMFQNDPIAIGAFHAMAKGVLTVNSAGNSGPKPISVSGVAPWILTVAASTTNRGFVTKVVLGNGKTLVGKSVNAYEMKGKDYPLVYGKSAASSACDAESAGLCELSCVDKSRVKGKILVCGGPGGLKIVESVGAVGLIYRTPKPDVAFIHPLPAAGLLTEDFESLVSYLESTDSPQAIVLKTEAIFNRTSPVIASFSSRGPNTIAVDILKPDITAPGVEILAAYSPAGEPSQDDTRHVKYSVLSGTSMSCPHVAGVAAYVKTFNPKWSPSMIQSAIMTTAWPVNATGTGIASTEFAYGSGHVDPIAASNPGLVYELDKSDHIAFLCGMNYTSQVLKVISGETVTCSEAKKILPRNLNYPSMSAKLSGSGTTFTVTFNRTLTNVGTPNSTYTSKVVAGHGSKLDVKITPSVLSFKTVNEKQSFTVTVTGSNLDSEVPSSANLIWSDGTHNVRSPIVVYTSDY</sequence>
<evidence type="ECO:0000250" key="1">
    <source>
        <dbReference type="UniProtKB" id="Q39547"/>
    </source>
</evidence>
<evidence type="ECO:0000250" key="2">
    <source>
        <dbReference type="UniProtKB" id="Q84WS0"/>
    </source>
</evidence>
<evidence type="ECO:0000255" key="3"/>
<evidence type="ECO:0000255" key="4">
    <source>
        <dbReference type="PROSITE-ProRule" id="PRU00498"/>
    </source>
</evidence>
<evidence type="ECO:0000255" key="5">
    <source>
        <dbReference type="PROSITE-ProRule" id="PRU01240"/>
    </source>
</evidence>
<evidence type="ECO:0000255" key="6">
    <source>
        <dbReference type="PROSITE-ProRule" id="PRU10082"/>
    </source>
</evidence>
<evidence type="ECO:0000303" key="7">
    <source>
    </source>
</evidence>
<evidence type="ECO:0000305" key="8"/>
<evidence type="ECO:0000312" key="9">
    <source>
        <dbReference type="Araport" id="AT5G59120"/>
    </source>
</evidence>
<evidence type="ECO:0000312" key="10">
    <source>
        <dbReference type="EMBL" id="BAB09758.1"/>
    </source>
</evidence>
<gene>
    <name evidence="7" type="primary">SBT4.13</name>
    <name evidence="9" type="ordered locus">At5g59120</name>
    <name evidence="10" type="ORF">MNC17.3</name>
</gene>
<name>SBT4D_ARATH</name>
<keyword id="KW-0068">Autocatalytic cleavage</keyword>
<keyword id="KW-0325">Glycoprotein</keyword>
<keyword id="KW-0378">Hydrolase</keyword>
<keyword id="KW-0645">Protease</keyword>
<keyword id="KW-1185">Reference proteome</keyword>
<keyword id="KW-0964">Secreted</keyword>
<keyword id="KW-0720">Serine protease</keyword>
<keyword id="KW-0732">Signal</keyword>
<keyword id="KW-0865">Zymogen</keyword>
<feature type="signal peptide" evidence="3">
    <location>
        <begin position="1"/>
        <end position="24"/>
    </location>
</feature>
<feature type="propeptide" id="PRO_0000435251" description="Activation peptide" evidence="1">
    <location>
        <begin position="25"/>
        <end position="109"/>
    </location>
</feature>
<feature type="chain" id="PRO_5004325421" description="Subtilisin-like protease SBT4.13" evidence="3">
    <location>
        <begin position="110"/>
        <end status="unknown"/>
    </location>
</feature>
<feature type="propeptide" id="PRO_0000435252" evidence="1">
    <location>
        <begin status="unknown"/>
        <end position="732"/>
    </location>
</feature>
<feature type="domain" description="Inhibitor I9" evidence="3">
    <location>
        <begin position="31"/>
        <end position="108"/>
    </location>
</feature>
<feature type="domain" description="Peptidase S8" evidence="5">
    <location>
        <begin position="113"/>
        <end position="579"/>
    </location>
</feature>
<feature type="domain" description="PA" evidence="3">
    <location>
        <begin position="352"/>
        <end position="436"/>
    </location>
</feature>
<feature type="active site" description="Charge relay system" evidence="5">
    <location>
        <position position="141"/>
    </location>
</feature>
<feature type="active site" description="Charge relay system" evidence="5">
    <location>
        <position position="196"/>
    </location>
</feature>
<feature type="active site" description="Charge relay system" evidence="5">
    <location>
        <position position="518"/>
    </location>
</feature>
<feature type="glycosylation site" description="N-linked (GlcNAc...) asparagine" evidence="4">
    <location>
        <position position="172"/>
    </location>
</feature>
<feature type="glycosylation site" description="N-linked (GlcNAc...) asparagine" evidence="4">
    <location>
        <position position="219"/>
    </location>
</feature>
<feature type="glycosylation site" description="N-linked (GlcNAc...) asparagine" evidence="4">
    <location>
        <position position="458"/>
    </location>
</feature>
<feature type="glycosylation site" description="N-linked (GlcNAc...) asparagine" evidence="4">
    <location>
        <position position="555"/>
    </location>
</feature>
<feature type="glycosylation site" description="N-linked (GlcNAc...) asparagine" evidence="4">
    <location>
        <position position="600"/>
    </location>
</feature>
<feature type="glycosylation site" description="N-linked (GlcNAc...) asparagine" evidence="4">
    <location>
        <position position="648"/>
    </location>
</feature>
<feature type="glycosylation site" description="N-linked (GlcNAc...) asparagine" evidence="4">
    <location>
        <position position="658"/>
    </location>
</feature>
<protein>
    <recommendedName>
        <fullName evidence="7">Subtilisin-like protease SBT4.13</fullName>
        <ecNumber evidence="6">3.4.21.-</ecNumber>
    </recommendedName>
    <alternativeName>
        <fullName evidence="7">Subtilase subfamily 4 member 13</fullName>
        <shortName evidence="7">AtSBT4.13</shortName>
    </alternativeName>
</protein>
<reference key="1">
    <citation type="journal article" date="1998" name="DNA Res.">
        <title>Structural analysis of Arabidopsis thaliana chromosome 5. VIII. Sequence features of the regions of 1,081,958 bp covered by seventeen physically assigned P1 and TAC clones.</title>
        <authorList>
            <person name="Asamizu E."/>
            <person name="Sato S."/>
            <person name="Kaneko T."/>
            <person name="Nakamura Y."/>
            <person name="Kotani H."/>
            <person name="Miyajima N."/>
            <person name="Tabata S."/>
        </authorList>
    </citation>
    <scope>NUCLEOTIDE SEQUENCE [LARGE SCALE GENOMIC DNA]</scope>
    <source>
        <strain>cv. Columbia</strain>
    </source>
</reference>
<reference key="2">
    <citation type="journal article" date="2017" name="Plant J.">
        <title>Araport11: a complete reannotation of the Arabidopsis thaliana reference genome.</title>
        <authorList>
            <person name="Cheng C.Y."/>
            <person name="Krishnakumar V."/>
            <person name="Chan A.P."/>
            <person name="Thibaud-Nissen F."/>
            <person name="Schobel S."/>
            <person name="Town C.D."/>
        </authorList>
    </citation>
    <scope>GENOME REANNOTATION</scope>
    <source>
        <strain>cv. Columbia</strain>
    </source>
</reference>
<reference key="3">
    <citation type="journal article" date="2003" name="Science">
        <title>Empirical analysis of transcriptional activity in the Arabidopsis genome.</title>
        <authorList>
            <person name="Yamada K."/>
            <person name="Lim J."/>
            <person name="Dale J.M."/>
            <person name="Chen H."/>
            <person name="Shinn P."/>
            <person name="Palm C.J."/>
            <person name="Southwick A.M."/>
            <person name="Wu H.C."/>
            <person name="Kim C.J."/>
            <person name="Nguyen M."/>
            <person name="Pham P.K."/>
            <person name="Cheuk R.F."/>
            <person name="Karlin-Newmann G."/>
            <person name="Liu S.X."/>
            <person name="Lam B."/>
            <person name="Sakano H."/>
            <person name="Wu T."/>
            <person name="Yu G."/>
            <person name="Miranda M."/>
            <person name="Quach H.L."/>
            <person name="Tripp M."/>
            <person name="Chang C.H."/>
            <person name="Lee J.M."/>
            <person name="Toriumi M.J."/>
            <person name="Chan M.M."/>
            <person name="Tang C.C."/>
            <person name="Onodera C.S."/>
            <person name="Deng J.M."/>
            <person name="Akiyama K."/>
            <person name="Ansari Y."/>
            <person name="Arakawa T."/>
            <person name="Banh J."/>
            <person name="Banno F."/>
            <person name="Bowser L."/>
            <person name="Brooks S.Y."/>
            <person name="Carninci P."/>
            <person name="Chao Q."/>
            <person name="Choy N."/>
            <person name="Enju A."/>
            <person name="Goldsmith A.D."/>
            <person name="Gurjal M."/>
            <person name="Hansen N.F."/>
            <person name="Hayashizaki Y."/>
            <person name="Johnson-Hopson C."/>
            <person name="Hsuan V.W."/>
            <person name="Iida K."/>
            <person name="Karnes M."/>
            <person name="Khan S."/>
            <person name="Koesema E."/>
            <person name="Ishida J."/>
            <person name="Jiang P.X."/>
            <person name="Jones T."/>
            <person name="Kawai J."/>
            <person name="Kamiya A."/>
            <person name="Meyers C."/>
            <person name="Nakajima M."/>
            <person name="Narusaka M."/>
            <person name="Seki M."/>
            <person name="Sakurai T."/>
            <person name="Satou M."/>
            <person name="Tamse R."/>
            <person name="Vaysberg M."/>
            <person name="Wallender E.K."/>
            <person name="Wong C."/>
            <person name="Yamamura Y."/>
            <person name="Yuan S."/>
            <person name="Shinozaki K."/>
            <person name="Davis R.W."/>
            <person name="Theologis A."/>
            <person name="Ecker J.R."/>
        </authorList>
    </citation>
    <scope>NUCLEOTIDE SEQUENCE [LARGE SCALE MRNA]</scope>
    <source>
        <strain>cv. Columbia</strain>
    </source>
</reference>
<reference key="4">
    <citation type="journal article" date="2005" name="PLoS Comput. Biol.">
        <title>Inferring hypotheses on functional relationships of genes: Analysis of the Arabidopsis thaliana subtilase gene family.</title>
        <authorList>
            <person name="Rautengarten C."/>
            <person name="Steinhauser D."/>
            <person name="Bussis D."/>
            <person name="Stintzi A."/>
            <person name="Schaller A."/>
            <person name="Kopka J."/>
            <person name="Altmann T."/>
        </authorList>
    </citation>
    <scope>GENE FAMILY</scope>
    <scope>NOMENCLATURE</scope>
</reference>
<proteinExistence type="evidence at transcript level"/>
<organism>
    <name type="scientific">Arabidopsis thaliana</name>
    <name type="common">Mouse-ear cress</name>
    <dbReference type="NCBI Taxonomy" id="3702"/>
    <lineage>
        <taxon>Eukaryota</taxon>
        <taxon>Viridiplantae</taxon>
        <taxon>Streptophyta</taxon>
        <taxon>Embryophyta</taxon>
        <taxon>Tracheophyta</taxon>
        <taxon>Spermatophyta</taxon>
        <taxon>Magnoliopsida</taxon>
        <taxon>eudicotyledons</taxon>
        <taxon>Gunneridae</taxon>
        <taxon>Pentapetalae</taxon>
        <taxon>rosids</taxon>
        <taxon>malvids</taxon>
        <taxon>Brassicales</taxon>
        <taxon>Brassicaceae</taxon>
        <taxon>Camelineae</taxon>
        <taxon>Arabidopsis</taxon>
    </lineage>
</organism>
<dbReference type="EC" id="3.4.21.-" evidence="6"/>
<dbReference type="EMBL" id="AB016890">
    <property type="protein sequence ID" value="BAB09758.1"/>
    <property type="molecule type" value="Genomic_DNA"/>
</dbReference>
<dbReference type="EMBL" id="CP002688">
    <property type="protein sequence ID" value="AED97145.1"/>
    <property type="molecule type" value="Genomic_DNA"/>
</dbReference>
<dbReference type="EMBL" id="AY093059">
    <property type="protein sequence ID" value="AAM13058.1"/>
    <property type="molecule type" value="mRNA"/>
</dbReference>
<dbReference type="EMBL" id="BT010334">
    <property type="protein sequence ID" value="AAQ56777.1"/>
    <property type="molecule type" value="mRNA"/>
</dbReference>
<dbReference type="RefSeq" id="NP_568898.2">
    <property type="nucleotide sequence ID" value="NM_125302.5"/>
</dbReference>
<dbReference type="SMR" id="Q9FIG2"/>
<dbReference type="FunCoup" id="Q9FIG2">
    <property type="interactions" value="23"/>
</dbReference>
<dbReference type="STRING" id="3702.Q9FIG2"/>
<dbReference type="MEROPS" id="S08.A21"/>
<dbReference type="GlyCosmos" id="Q9FIG2">
    <property type="glycosylation" value="7 sites, No reported glycans"/>
</dbReference>
<dbReference type="GlyGen" id="Q9FIG2">
    <property type="glycosylation" value="7 sites"/>
</dbReference>
<dbReference type="PaxDb" id="3702-AT5G59120.1"/>
<dbReference type="ProteomicsDB" id="232956"/>
<dbReference type="EnsemblPlants" id="AT5G59120.1">
    <property type="protein sequence ID" value="AT5G59120.1"/>
    <property type="gene ID" value="AT5G59120"/>
</dbReference>
<dbReference type="GeneID" id="836030"/>
<dbReference type="Gramene" id="AT5G59120.1">
    <property type="protein sequence ID" value="AT5G59120.1"/>
    <property type="gene ID" value="AT5G59120"/>
</dbReference>
<dbReference type="KEGG" id="ath:AT5G59120"/>
<dbReference type="Araport" id="AT5G59120"/>
<dbReference type="TAIR" id="AT5G59120">
    <property type="gene designation" value="SBT4.13"/>
</dbReference>
<dbReference type="eggNOG" id="ENOG502QRA7">
    <property type="taxonomic scope" value="Eukaryota"/>
</dbReference>
<dbReference type="HOGENOM" id="CLU_000625_4_3_1"/>
<dbReference type="InParanoid" id="Q9FIG2"/>
<dbReference type="OMA" id="YKVCTPT"/>
<dbReference type="PhylomeDB" id="Q9FIG2"/>
<dbReference type="PRO" id="PR:Q9FIG2"/>
<dbReference type="Proteomes" id="UP000006548">
    <property type="component" value="Chromosome 5"/>
</dbReference>
<dbReference type="ExpressionAtlas" id="Q9FIG2">
    <property type="expression patterns" value="baseline and differential"/>
</dbReference>
<dbReference type="GO" id="GO:0005576">
    <property type="term" value="C:extracellular region"/>
    <property type="evidence" value="ECO:0007669"/>
    <property type="project" value="UniProtKB-SubCell"/>
</dbReference>
<dbReference type="GO" id="GO:0004252">
    <property type="term" value="F:serine-type endopeptidase activity"/>
    <property type="evidence" value="ECO:0007669"/>
    <property type="project" value="InterPro"/>
</dbReference>
<dbReference type="GO" id="GO:0006508">
    <property type="term" value="P:proteolysis"/>
    <property type="evidence" value="ECO:0007669"/>
    <property type="project" value="UniProtKB-KW"/>
</dbReference>
<dbReference type="CDD" id="cd02120">
    <property type="entry name" value="PA_subtilisin_like"/>
    <property type="match status" value="1"/>
</dbReference>
<dbReference type="CDD" id="cd04852">
    <property type="entry name" value="Peptidases_S8_3"/>
    <property type="match status" value="1"/>
</dbReference>
<dbReference type="FunFam" id="2.60.40.2310:FF:000001">
    <property type="entry name" value="Subtilisin-like protease SBT1.5"/>
    <property type="match status" value="1"/>
</dbReference>
<dbReference type="FunFam" id="3.30.70.80:FF:000002">
    <property type="entry name" value="Subtilisin-like protease SBT5.3"/>
    <property type="match status" value="1"/>
</dbReference>
<dbReference type="Gene3D" id="2.60.40.2310">
    <property type="match status" value="1"/>
</dbReference>
<dbReference type="Gene3D" id="3.50.30.30">
    <property type="match status" value="1"/>
</dbReference>
<dbReference type="Gene3D" id="3.30.70.80">
    <property type="entry name" value="Peptidase S8 propeptide/proteinase inhibitor I9"/>
    <property type="match status" value="1"/>
</dbReference>
<dbReference type="Gene3D" id="3.40.50.200">
    <property type="entry name" value="Peptidase S8/S53 domain"/>
    <property type="match status" value="1"/>
</dbReference>
<dbReference type="InterPro" id="IPR000209">
    <property type="entry name" value="Peptidase_S8/S53_dom"/>
</dbReference>
<dbReference type="InterPro" id="IPR036852">
    <property type="entry name" value="Peptidase_S8/S53_dom_sf"/>
</dbReference>
<dbReference type="InterPro" id="IPR023828">
    <property type="entry name" value="Peptidase_S8_Ser-AS"/>
</dbReference>
<dbReference type="InterPro" id="IPR015500">
    <property type="entry name" value="Peptidase_S8_subtilisin-rel"/>
</dbReference>
<dbReference type="InterPro" id="IPR034197">
    <property type="entry name" value="Peptidases_S8_3"/>
</dbReference>
<dbReference type="InterPro" id="IPR010259">
    <property type="entry name" value="S8pro/Inhibitor_I9"/>
</dbReference>
<dbReference type="InterPro" id="IPR037045">
    <property type="entry name" value="S8pro/Inhibitor_I9_sf"/>
</dbReference>
<dbReference type="InterPro" id="IPR045051">
    <property type="entry name" value="SBT"/>
</dbReference>
<dbReference type="InterPro" id="IPR041469">
    <property type="entry name" value="Subtilisin-like_FN3"/>
</dbReference>
<dbReference type="PANTHER" id="PTHR10795">
    <property type="entry name" value="PROPROTEIN CONVERTASE SUBTILISIN/KEXIN"/>
    <property type="match status" value="1"/>
</dbReference>
<dbReference type="Pfam" id="PF17766">
    <property type="entry name" value="fn3_6"/>
    <property type="match status" value="1"/>
</dbReference>
<dbReference type="Pfam" id="PF05922">
    <property type="entry name" value="Inhibitor_I9"/>
    <property type="match status" value="1"/>
</dbReference>
<dbReference type="Pfam" id="PF00082">
    <property type="entry name" value="Peptidase_S8"/>
    <property type="match status" value="1"/>
</dbReference>
<dbReference type="PRINTS" id="PR00723">
    <property type="entry name" value="SUBTILISIN"/>
</dbReference>
<dbReference type="SUPFAM" id="SSF52743">
    <property type="entry name" value="Subtilisin-like"/>
    <property type="match status" value="1"/>
</dbReference>
<dbReference type="PROSITE" id="PS51892">
    <property type="entry name" value="SUBTILASE"/>
    <property type="match status" value="1"/>
</dbReference>
<dbReference type="PROSITE" id="PS00138">
    <property type="entry name" value="SUBTILASE_SER"/>
    <property type="match status" value="1"/>
</dbReference>